<sequence length="362" mass="39468">MLGSGFKAERLRVNLRLVINRLKLLEKKKTELAQKARKEIADYLAAGKDERARIRVEHIIREDYLVEAMEILELYCDLLLARFGLIQSMKELDSGLAESVSTLIWAAPRLQSEVAELKIVADQLCAKYSKEYGKLCRTNQIGTVNDRLMHKLSVEAPPKILVERYLIEIAKNYNVPYEPDSVVMAEAPVGVETDLIDVGFTDDVKKGGPGRGGGGGFTAPVGGPDGIVPMPMPMPMPSPNAPFAYPLPKGPSDFSGLPVGTYQAFPNIHPPQIPATPPSYESVDDINGDKTVSSAQIVGPKPEAPAKPPSRPVDNYNTFVLPELPSVPDTLPTASAGASTSASEDIDFDDLSRRFEELKKKT</sequence>
<organism>
    <name type="scientific">Mus musculus</name>
    <name type="common">Mouse</name>
    <dbReference type="NCBI Taxonomy" id="10090"/>
    <lineage>
        <taxon>Eukaryota</taxon>
        <taxon>Metazoa</taxon>
        <taxon>Chordata</taxon>
        <taxon>Craniata</taxon>
        <taxon>Vertebrata</taxon>
        <taxon>Euteleostomi</taxon>
        <taxon>Mammalia</taxon>
        <taxon>Eutheria</taxon>
        <taxon>Euarchontoglires</taxon>
        <taxon>Glires</taxon>
        <taxon>Rodentia</taxon>
        <taxon>Myomorpha</taxon>
        <taxon>Muroidea</taxon>
        <taxon>Muridae</taxon>
        <taxon>Murinae</taxon>
        <taxon>Mus</taxon>
        <taxon>Mus</taxon>
    </lineage>
</organism>
<evidence type="ECO:0000250" key="1">
    <source>
        <dbReference type="UniProtKB" id="P53990"/>
    </source>
</evidence>
<evidence type="ECO:0000256" key="2">
    <source>
        <dbReference type="SAM" id="MobiDB-lite"/>
    </source>
</evidence>
<evidence type="ECO:0000305" key="3"/>
<reference key="1">
    <citation type="journal article" date="2005" name="Science">
        <title>The transcriptional landscape of the mammalian genome.</title>
        <authorList>
            <person name="Carninci P."/>
            <person name="Kasukawa T."/>
            <person name="Katayama S."/>
            <person name="Gough J."/>
            <person name="Frith M.C."/>
            <person name="Maeda N."/>
            <person name="Oyama R."/>
            <person name="Ravasi T."/>
            <person name="Lenhard B."/>
            <person name="Wells C."/>
            <person name="Kodzius R."/>
            <person name="Shimokawa K."/>
            <person name="Bajic V.B."/>
            <person name="Brenner S.E."/>
            <person name="Batalov S."/>
            <person name="Forrest A.R."/>
            <person name="Zavolan M."/>
            <person name="Davis M.J."/>
            <person name="Wilming L.G."/>
            <person name="Aidinis V."/>
            <person name="Allen J.E."/>
            <person name="Ambesi-Impiombato A."/>
            <person name="Apweiler R."/>
            <person name="Aturaliya R.N."/>
            <person name="Bailey T.L."/>
            <person name="Bansal M."/>
            <person name="Baxter L."/>
            <person name="Beisel K.W."/>
            <person name="Bersano T."/>
            <person name="Bono H."/>
            <person name="Chalk A.M."/>
            <person name="Chiu K.P."/>
            <person name="Choudhary V."/>
            <person name="Christoffels A."/>
            <person name="Clutterbuck D.R."/>
            <person name="Crowe M.L."/>
            <person name="Dalla E."/>
            <person name="Dalrymple B.P."/>
            <person name="de Bono B."/>
            <person name="Della Gatta G."/>
            <person name="di Bernardo D."/>
            <person name="Down T."/>
            <person name="Engstrom P."/>
            <person name="Fagiolini M."/>
            <person name="Faulkner G."/>
            <person name="Fletcher C.F."/>
            <person name="Fukushima T."/>
            <person name="Furuno M."/>
            <person name="Futaki S."/>
            <person name="Gariboldi M."/>
            <person name="Georgii-Hemming P."/>
            <person name="Gingeras T.R."/>
            <person name="Gojobori T."/>
            <person name="Green R.E."/>
            <person name="Gustincich S."/>
            <person name="Harbers M."/>
            <person name="Hayashi Y."/>
            <person name="Hensch T.K."/>
            <person name="Hirokawa N."/>
            <person name="Hill D."/>
            <person name="Huminiecki L."/>
            <person name="Iacono M."/>
            <person name="Ikeo K."/>
            <person name="Iwama A."/>
            <person name="Ishikawa T."/>
            <person name="Jakt M."/>
            <person name="Kanapin A."/>
            <person name="Katoh M."/>
            <person name="Kawasawa Y."/>
            <person name="Kelso J."/>
            <person name="Kitamura H."/>
            <person name="Kitano H."/>
            <person name="Kollias G."/>
            <person name="Krishnan S.P."/>
            <person name="Kruger A."/>
            <person name="Kummerfeld S.K."/>
            <person name="Kurochkin I.V."/>
            <person name="Lareau L.F."/>
            <person name="Lazarevic D."/>
            <person name="Lipovich L."/>
            <person name="Liu J."/>
            <person name="Liuni S."/>
            <person name="McWilliam S."/>
            <person name="Madan Babu M."/>
            <person name="Madera M."/>
            <person name="Marchionni L."/>
            <person name="Matsuda H."/>
            <person name="Matsuzawa S."/>
            <person name="Miki H."/>
            <person name="Mignone F."/>
            <person name="Miyake S."/>
            <person name="Morris K."/>
            <person name="Mottagui-Tabar S."/>
            <person name="Mulder N."/>
            <person name="Nakano N."/>
            <person name="Nakauchi H."/>
            <person name="Ng P."/>
            <person name="Nilsson R."/>
            <person name="Nishiguchi S."/>
            <person name="Nishikawa S."/>
            <person name="Nori F."/>
            <person name="Ohara O."/>
            <person name="Okazaki Y."/>
            <person name="Orlando V."/>
            <person name="Pang K.C."/>
            <person name="Pavan W.J."/>
            <person name="Pavesi G."/>
            <person name="Pesole G."/>
            <person name="Petrovsky N."/>
            <person name="Piazza S."/>
            <person name="Reed J."/>
            <person name="Reid J.F."/>
            <person name="Ring B.Z."/>
            <person name="Ringwald M."/>
            <person name="Rost B."/>
            <person name="Ruan Y."/>
            <person name="Salzberg S.L."/>
            <person name="Sandelin A."/>
            <person name="Schneider C."/>
            <person name="Schoenbach C."/>
            <person name="Sekiguchi K."/>
            <person name="Semple C.A."/>
            <person name="Seno S."/>
            <person name="Sessa L."/>
            <person name="Sheng Y."/>
            <person name="Shibata Y."/>
            <person name="Shimada H."/>
            <person name="Shimada K."/>
            <person name="Silva D."/>
            <person name="Sinclair B."/>
            <person name="Sperling S."/>
            <person name="Stupka E."/>
            <person name="Sugiura K."/>
            <person name="Sultana R."/>
            <person name="Takenaka Y."/>
            <person name="Taki K."/>
            <person name="Tammoja K."/>
            <person name="Tan S.L."/>
            <person name="Tang S."/>
            <person name="Taylor M.S."/>
            <person name="Tegner J."/>
            <person name="Teichmann S.A."/>
            <person name="Ueda H.R."/>
            <person name="van Nimwegen E."/>
            <person name="Verardo R."/>
            <person name="Wei C.L."/>
            <person name="Yagi K."/>
            <person name="Yamanishi H."/>
            <person name="Zabarovsky E."/>
            <person name="Zhu S."/>
            <person name="Zimmer A."/>
            <person name="Hide W."/>
            <person name="Bult C."/>
            <person name="Grimmond S.M."/>
            <person name="Teasdale R.D."/>
            <person name="Liu E.T."/>
            <person name="Brusic V."/>
            <person name="Quackenbush J."/>
            <person name="Wahlestedt C."/>
            <person name="Mattick J.S."/>
            <person name="Hume D.A."/>
            <person name="Kai C."/>
            <person name="Sasaki D."/>
            <person name="Tomaru Y."/>
            <person name="Fukuda S."/>
            <person name="Kanamori-Katayama M."/>
            <person name="Suzuki M."/>
            <person name="Aoki J."/>
            <person name="Arakawa T."/>
            <person name="Iida J."/>
            <person name="Imamura K."/>
            <person name="Itoh M."/>
            <person name="Kato T."/>
            <person name="Kawaji H."/>
            <person name="Kawagashira N."/>
            <person name="Kawashima T."/>
            <person name="Kojima M."/>
            <person name="Kondo S."/>
            <person name="Konno H."/>
            <person name="Nakano K."/>
            <person name="Ninomiya N."/>
            <person name="Nishio T."/>
            <person name="Okada M."/>
            <person name="Plessy C."/>
            <person name="Shibata K."/>
            <person name="Shiraki T."/>
            <person name="Suzuki S."/>
            <person name="Tagami M."/>
            <person name="Waki K."/>
            <person name="Watahiki A."/>
            <person name="Okamura-Oho Y."/>
            <person name="Suzuki H."/>
            <person name="Kawai J."/>
            <person name="Hayashizaki Y."/>
        </authorList>
    </citation>
    <scope>NUCLEOTIDE SEQUENCE [LARGE SCALE MRNA]</scope>
    <source>
        <strain>C57BL/6J</strain>
        <strain>NOD</strain>
        <tissue>Bone marrow</tissue>
        <tissue>Thymus</tissue>
    </source>
</reference>
<reference key="2">
    <citation type="journal article" date="2004" name="Genome Res.">
        <title>The status, quality, and expansion of the NIH full-length cDNA project: the Mammalian Gene Collection (MGC).</title>
        <authorList>
            <consortium name="The MGC Project Team"/>
        </authorList>
    </citation>
    <scope>NUCLEOTIDE SEQUENCE [LARGE SCALE MRNA]</scope>
    <source>
        <tissue>Eye</tissue>
    </source>
</reference>
<reference key="3">
    <citation type="journal article" date="2003" name="DNA Res.">
        <title>Prediction of the coding sequences of mouse homologues of KIAA gene: II. The complete nucleotide sequences of 400 mouse KIAA-homologous cDNAs identified by screening of terminal sequences of cDNA clones randomly sampled from size-fractionated libraries.</title>
        <authorList>
            <person name="Okazaki N."/>
            <person name="Kikuno R."/>
            <person name="Ohara R."/>
            <person name="Inamoto S."/>
            <person name="Aizawa H."/>
            <person name="Yuasa S."/>
            <person name="Nakajima D."/>
            <person name="Nagase T."/>
            <person name="Ohara O."/>
            <person name="Koga H."/>
        </authorList>
    </citation>
    <scope>NUCLEOTIDE SEQUENCE [LARGE SCALE MRNA] OF 35-256</scope>
    <source>
        <tissue>Brain</tissue>
    </source>
</reference>
<reference key="4">
    <citation type="journal article" date="2010" name="Cell">
        <title>A tissue-specific atlas of mouse protein phosphorylation and expression.</title>
        <authorList>
            <person name="Huttlin E.L."/>
            <person name="Jedrychowski M.P."/>
            <person name="Elias J.E."/>
            <person name="Goswami T."/>
            <person name="Rad R."/>
            <person name="Beausoleil S.A."/>
            <person name="Villen J."/>
            <person name="Haas W."/>
            <person name="Sowa M.E."/>
            <person name="Gygi S.P."/>
        </authorList>
    </citation>
    <scope>IDENTIFICATION BY MASS SPECTROMETRY [LARGE SCALE ANALYSIS]</scope>
    <source>
        <tissue>Brown adipose tissue</tissue>
        <tissue>Heart</tissue>
        <tissue>Kidney</tissue>
        <tissue>Lung</tissue>
        <tissue>Pancreas</tissue>
        <tissue>Spleen</tissue>
        <tissue>Testis</tissue>
    </source>
</reference>
<comment type="function">
    <text evidence="1">ESCRT-III-like protein involved in cytokinesis, nuclear envelope reassembly and endosomal tubulation (By similarity). Is required for efficient abscission during cytokinesis (By similarity). Involved in recruiting VPS4A and/or VPS4B to the midbody of dividing cells (By similarity). During late anaphase, involved in nuclear envelope reassembly and mitotic spindle disassembly together with the ESCRT-III complex: IST1 acts by mediating the recruitment of SPAST to the nuclear membrane, leading to microtubule severing (By similarity). Recruited to the reforming nuclear envelope (NE) during anaphase by LEMD2 (By similarity). Regulates early endosomal tubulation together with the ESCRT-III complex by mediating the recruitment of SPAST (By similarity).</text>
</comment>
<comment type="subunit">
    <text evidence="1">Interacts with CHMP1A, CHMP1B, VPS4A and VTA1. Interacts with SPAST, STAMBP, and USP8. May interact with VPS37B. May associate with the ESCRT-I complex. Interacts with MITD1, in competition with VSP4. Interacts with SPART (via MIT domain); leading to the recruitment of SPART to midbodies. Interacts with SPAST.</text>
</comment>
<comment type="subcellular location">
    <subcellularLocation>
        <location evidence="1">Cytoplasmic vesicle</location>
    </subcellularLocation>
    <subcellularLocation>
        <location evidence="1">Cytoplasm</location>
        <location evidence="1">Cytoskeleton</location>
        <location evidence="1">Microtubule organizing center</location>
        <location evidence="1">Centrosome</location>
    </subcellularLocation>
    <subcellularLocation>
        <location evidence="1">Midbody</location>
    </subcellularLocation>
    <subcellularLocation>
        <location evidence="1">Nucleus envelope</location>
    </subcellularLocation>
    <text evidence="1">Localizes to centrosome and midbody of dividing cells. Colocalized with SPART to the ends of Flemming bodies during cytokinesis. Localizes to the reforming nuclear envelope on chromatin disks during late anaphase.</text>
</comment>
<comment type="similarity">
    <text evidence="3">Belongs to the IST1 family.</text>
</comment>
<name>IST1_MOUSE</name>
<dbReference type="EMBL" id="AK010262">
    <property type="protein sequence ID" value="BAB26804.1"/>
    <property type="molecule type" value="mRNA"/>
</dbReference>
<dbReference type="EMBL" id="AK088192">
    <property type="protein sequence ID" value="BAC40200.1"/>
    <property type="molecule type" value="mRNA"/>
</dbReference>
<dbReference type="EMBL" id="AK152830">
    <property type="protein sequence ID" value="BAE31530.1"/>
    <property type="molecule type" value="mRNA"/>
</dbReference>
<dbReference type="EMBL" id="BC017605">
    <property type="protein sequence ID" value="AAH17605.1"/>
    <property type="molecule type" value="mRNA"/>
</dbReference>
<dbReference type="EMBL" id="AK122215">
    <property type="protein sequence ID" value="BAC65497.1"/>
    <property type="molecule type" value="mRNA"/>
</dbReference>
<dbReference type="CCDS" id="CCDS22655.1"/>
<dbReference type="RefSeq" id="NP_082294.1">
    <property type="nucleotide sequence ID" value="NM_028018.2"/>
</dbReference>
<dbReference type="SMR" id="Q9CX00"/>
<dbReference type="BioGRID" id="215054">
    <property type="interactions" value="9"/>
</dbReference>
<dbReference type="FunCoup" id="Q9CX00">
    <property type="interactions" value="3920"/>
</dbReference>
<dbReference type="STRING" id="10090.ENSMUSP00000034164"/>
<dbReference type="iPTMnet" id="Q9CX00"/>
<dbReference type="PhosphoSitePlus" id="Q9CX00"/>
<dbReference type="jPOST" id="Q9CX00"/>
<dbReference type="PaxDb" id="10090-ENSMUSP00000034164"/>
<dbReference type="PeptideAtlas" id="Q9CX00"/>
<dbReference type="ProteomicsDB" id="301680"/>
<dbReference type="Pumba" id="Q9CX00"/>
<dbReference type="Antibodypedia" id="44614">
    <property type="antibodies" value="142 antibodies from 26 providers"/>
</dbReference>
<dbReference type="Ensembl" id="ENSMUST00000034164.6">
    <property type="protein sequence ID" value="ENSMUSP00000034164.5"/>
    <property type="gene ID" value="ENSMUSG00000031729.7"/>
</dbReference>
<dbReference type="GeneID" id="71955"/>
<dbReference type="KEGG" id="mmu:71955"/>
<dbReference type="UCSC" id="uc009niy.2">
    <property type="organism name" value="mouse"/>
</dbReference>
<dbReference type="AGR" id="MGI:1919205"/>
<dbReference type="CTD" id="9798"/>
<dbReference type="MGI" id="MGI:1919205">
    <property type="gene designation" value="Ist1"/>
</dbReference>
<dbReference type="VEuPathDB" id="HostDB:ENSMUSG00000031729"/>
<dbReference type="eggNOG" id="KOG2027">
    <property type="taxonomic scope" value="Eukaryota"/>
</dbReference>
<dbReference type="GeneTree" id="ENSGT00390000007453"/>
<dbReference type="HOGENOM" id="CLU_037652_0_0_1"/>
<dbReference type="InParanoid" id="Q9CX00"/>
<dbReference type="OMA" id="YQPFPNI"/>
<dbReference type="OrthoDB" id="29853at2759"/>
<dbReference type="PhylomeDB" id="Q9CX00"/>
<dbReference type="TreeFam" id="TF314258"/>
<dbReference type="Reactome" id="R-MMU-6798695">
    <property type="pathway name" value="Neutrophil degranulation"/>
</dbReference>
<dbReference type="Reactome" id="R-MMU-9668328">
    <property type="pathway name" value="Sealing of the nuclear envelope (NE) by ESCRT-III"/>
</dbReference>
<dbReference type="BioGRID-ORCS" id="71955">
    <property type="hits" value="20 hits in 75 CRISPR screens"/>
</dbReference>
<dbReference type="CD-CODE" id="CE726F99">
    <property type="entry name" value="Postsynaptic density"/>
</dbReference>
<dbReference type="ChiTaRS" id="Ist1">
    <property type="organism name" value="mouse"/>
</dbReference>
<dbReference type="PRO" id="PR:Q9CX00"/>
<dbReference type="Proteomes" id="UP000000589">
    <property type="component" value="Chromosome 8"/>
</dbReference>
<dbReference type="RNAct" id="Q9CX00">
    <property type="molecule type" value="protein"/>
</dbReference>
<dbReference type="Bgee" id="ENSMUSG00000031729">
    <property type="expression patterns" value="Expressed in urinary bladder urothelium and 268 other cell types or tissues"/>
</dbReference>
<dbReference type="GO" id="GO:0005813">
    <property type="term" value="C:centrosome"/>
    <property type="evidence" value="ECO:0007669"/>
    <property type="project" value="UniProtKB-SubCell"/>
</dbReference>
<dbReference type="GO" id="GO:0000785">
    <property type="term" value="C:chromatin"/>
    <property type="evidence" value="ECO:0007669"/>
    <property type="project" value="Ensembl"/>
</dbReference>
<dbReference type="GO" id="GO:0031410">
    <property type="term" value="C:cytoplasmic vesicle"/>
    <property type="evidence" value="ECO:0007669"/>
    <property type="project" value="UniProtKB-KW"/>
</dbReference>
<dbReference type="GO" id="GO:0005829">
    <property type="term" value="C:cytosol"/>
    <property type="evidence" value="ECO:0007669"/>
    <property type="project" value="Ensembl"/>
</dbReference>
<dbReference type="GO" id="GO:0005793">
    <property type="term" value="C:endoplasmic reticulum-Golgi intermediate compartment"/>
    <property type="evidence" value="ECO:0007669"/>
    <property type="project" value="Ensembl"/>
</dbReference>
<dbReference type="GO" id="GO:0090543">
    <property type="term" value="C:Flemming body"/>
    <property type="evidence" value="ECO:0007669"/>
    <property type="project" value="Ensembl"/>
</dbReference>
<dbReference type="GO" id="GO:0005635">
    <property type="term" value="C:nuclear envelope"/>
    <property type="evidence" value="ECO:0007669"/>
    <property type="project" value="UniProtKB-SubCell"/>
</dbReference>
<dbReference type="GO" id="GO:0090541">
    <property type="term" value="F:MIT domain binding"/>
    <property type="evidence" value="ECO:0007669"/>
    <property type="project" value="Ensembl"/>
</dbReference>
<dbReference type="GO" id="GO:0044877">
    <property type="term" value="F:protein-containing complex binding"/>
    <property type="evidence" value="ECO:0007669"/>
    <property type="project" value="Ensembl"/>
</dbReference>
<dbReference type="GO" id="GO:0048668">
    <property type="term" value="P:collateral sprouting"/>
    <property type="evidence" value="ECO:0000316"/>
    <property type="project" value="MGI"/>
</dbReference>
<dbReference type="GO" id="GO:0061952">
    <property type="term" value="P:midbody abscission"/>
    <property type="evidence" value="ECO:0007669"/>
    <property type="project" value="Ensembl"/>
</dbReference>
<dbReference type="GO" id="GO:0048672">
    <property type="term" value="P:positive regulation of collateral sprouting"/>
    <property type="evidence" value="ECO:0000316"/>
    <property type="project" value="MGI"/>
</dbReference>
<dbReference type="GO" id="GO:0045862">
    <property type="term" value="P:positive regulation of proteolysis"/>
    <property type="evidence" value="ECO:0007669"/>
    <property type="project" value="Ensembl"/>
</dbReference>
<dbReference type="GO" id="GO:0015031">
    <property type="term" value="P:protein transport"/>
    <property type="evidence" value="ECO:0007669"/>
    <property type="project" value="InterPro"/>
</dbReference>
<dbReference type="FunFam" id="1.20.1260.60:FF:000001">
    <property type="entry name" value="IST1 homolog isoform X1"/>
    <property type="match status" value="1"/>
</dbReference>
<dbReference type="Gene3D" id="1.20.1260.60">
    <property type="entry name" value="Vacuolar protein sorting-associated protein Ist1"/>
    <property type="match status" value="1"/>
</dbReference>
<dbReference type="InterPro" id="IPR005061">
    <property type="entry name" value="Ist1"/>
</dbReference>
<dbReference type="InterPro" id="IPR042277">
    <property type="entry name" value="IST1-like"/>
</dbReference>
<dbReference type="PANTHER" id="PTHR12161">
    <property type="entry name" value="IST1 FAMILY MEMBER"/>
    <property type="match status" value="1"/>
</dbReference>
<dbReference type="PANTHER" id="PTHR12161:SF5">
    <property type="entry name" value="IST1 HOMOLOG"/>
    <property type="match status" value="1"/>
</dbReference>
<dbReference type="Pfam" id="PF03398">
    <property type="entry name" value="Ist1"/>
    <property type="match status" value="1"/>
</dbReference>
<accession>Q9CX00</accession>
<accession>Q80U68</accession>
<gene>
    <name type="primary">Ist1</name>
    <name type="synonym">Kiaa0174</name>
</gene>
<keyword id="KW-0131">Cell cycle</keyword>
<keyword id="KW-0132">Cell division</keyword>
<keyword id="KW-0963">Cytoplasm</keyword>
<keyword id="KW-0968">Cytoplasmic vesicle</keyword>
<keyword id="KW-0206">Cytoskeleton</keyword>
<keyword id="KW-0539">Nucleus</keyword>
<keyword id="KW-0597">Phosphoprotein</keyword>
<keyword id="KW-1185">Reference proteome</keyword>
<feature type="chain" id="PRO_0000050728" description="IST1 homolog">
    <location>
        <begin position="1"/>
        <end position="362"/>
    </location>
</feature>
<feature type="region of interest" description="Disordered" evidence="2">
    <location>
        <begin position="292"/>
        <end position="350"/>
    </location>
</feature>
<feature type="compositionally biased region" description="Pro residues" evidence="2">
    <location>
        <begin position="302"/>
        <end position="311"/>
    </location>
</feature>
<feature type="compositionally biased region" description="Low complexity" evidence="2">
    <location>
        <begin position="333"/>
        <end position="343"/>
    </location>
</feature>
<feature type="modified residue" description="Phosphoserine" evidence="1">
    <location>
        <position position="4"/>
    </location>
</feature>
<feature type="modified residue" description="Phosphotyrosine" evidence="1">
    <location>
        <position position="43"/>
    </location>
</feature>
<feature type="sequence conflict" description="In Ref. 3; BAC65497." evidence="3" ref="3">
    <original>SDFSG</original>
    <variation>VSMCV</variation>
    <location>
        <begin position="252"/>
        <end position="256"/>
    </location>
</feature>
<proteinExistence type="evidence at protein level"/>
<protein>
    <recommendedName>
        <fullName>IST1 homolog</fullName>
    </recommendedName>
    <alternativeName>
        <fullName evidence="1">Charged multivesicular body protein 8</fullName>
        <shortName evidence="1">CHMP8</shortName>
    </alternativeName>
</protein>